<evidence type="ECO:0000255" key="1"/>
<evidence type="ECO:0000269" key="2">
    <source>
    </source>
</evidence>
<evidence type="ECO:0000305" key="3"/>
<evidence type="ECO:0007829" key="4">
    <source>
        <dbReference type="PDB" id="3EBK"/>
    </source>
</evidence>
<organism>
    <name type="scientific">Blattella germanica</name>
    <name type="common">German cockroach</name>
    <name type="synonym">Blatta germanica</name>
    <dbReference type="NCBI Taxonomy" id="6973"/>
    <lineage>
        <taxon>Eukaryota</taxon>
        <taxon>Metazoa</taxon>
        <taxon>Ecdysozoa</taxon>
        <taxon>Arthropoda</taxon>
        <taxon>Hexapoda</taxon>
        <taxon>Insecta</taxon>
        <taxon>Pterygota</taxon>
        <taxon>Neoptera</taxon>
        <taxon>Polyneoptera</taxon>
        <taxon>Dictyoptera</taxon>
        <taxon>Blattodea</taxon>
        <taxon>Blaberoidea</taxon>
        <taxon>Blattellidae</taxon>
        <taxon>Blattella</taxon>
    </lineage>
</organism>
<dbReference type="EMBL" id="U40767">
    <property type="protein sequence ID" value="AAA87851.1"/>
    <property type="molecule type" value="mRNA"/>
</dbReference>
<dbReference type="PDB" id="3EBK">
    <property type="method" value="X-ray"/>
    <property type="resolution" value="1.90 A"/>
    <property type="chains" value="A/B=7-182"/>
</dbReference>
<dbReference type="PDBsum" id="3EBK"/>
<dbReference type="SMR" id="P54962"/>
<dbReference type="Allergome" id="143">
    <property type="allergen name" value="Bla g 4"/>
</dbReference>
<dbReference type="Allergome" id="3141">
    <property type="allergen name" value="Bla g 4.0101"/>
</dbReference>
<dbReference type="EvolutionaryTrace" id="P54962"/>
<dbReference type="GO" id="GO:0005576">
    <property type="term" value="C:extracellular region"/>
    <property type="evidence" value="ECO:0007669"/>
    <property type="project" value="UniProtKB-SubCell"/>
</dbReference>
<dbReference type="GO" id="GO:0030682">
    <property type="term" value="P:symbiont-mediated perturbation of host defenses"/>
    <property type="evidence" value="ECO:0007669"/>
    <property type="project" value="InterPro"/>
</dbReference>
<dbReference type="Gene3D" id="2.40.128.20">
    <property type="match status" value="1"/>
</dbReference>
<dbReference type="InterPro" id="IPR012674">
    <property type="entry name" value="Calycin"/>
</dbReference>
<dbReference type="InterPro" id="IPR005657">
    <property type="entry name" value="Triabi/Procalin"/>
</dbReference>
<dbReference type="Pfam" id="PF03973">
    <property type="entry name" value="Triabin"/>
    <property type="match status" value="1"/>
</dbReference>
<dbReference type="SUPFAM" id="SSF50814">
    <property type="entry name" value="Lipocalins"/>
    <property type="match status" value="1"/>
</dbReference>
<accession>P54962</accession>
<feature type="signal peptide" evidence="1">
    <location>
        <begin position="1" status="less than"/>
        <end position="12"/>
    </location>
</feature>
<feature type="chain" id="PRO_0000017984" description="Allergen Bla g 4">
    <location>
        <begin position="13"/>
        <end position="182"/>
    </location>
</feature>
<feature type="glycosylation site" description="N-linked (GlcNAc...) asparagine" evidence="1">
    <location>
        <position position="72"/>
    </location>
</feature>
<feature type="non-terminal residue">
    <location>
        <position position="1"/>
    </location>
</feature>
<feature type="turn" evidence="4">
    <location>
        <begin position="14"/>
        <end position="16"/>
    </location>
</feature>
<feature type="helix" evidence="4">
    <location>
        <begin position="28"/>
        <end position="31"/>
    </location>
</feature>
<feature type="strand" evidence="4">
    <location>
        <begin position="33"/>
        <end position="41"/>
    </location>
</feature>
<feature type="helix" evidence="4">
    <location>
        <begin position="44"/>
        <end position="47"/>
    </location>
</feature>
<feature type="strand" evidence="4">
    <location>
        <begin position="48"/>
        <end position="56"/>
    </location>
</feature>
<feature type="turn" evidence="4">
    <location>
        <begin position="57"/>
        <end position="59"/>
    </location>
</feature>
<feature type="strand" evidence="4">
    <location>
        <begin position="60"/>
        <end position="66"/>
    </location>
</feature>
<feature type="strand" evidence="4">
    <location>
        <begin position="74"/>
        <end position="83"/>
    </location>
</feature>
<feature type="strand" evidence="4">
    <location>
        <begin position="86"/>
        <end position="91"/>
    </location>
</feature>
<feature type="helix" evidence="4">
    <location>
        <begin position="96"/>
        <end position="98"/>
    </location>
</feature>
<feature type="strand" evidence="4">
    <location>
        <begin position="100"/>
        <end position="107"/>
    </location>
</feature>
<feature type="strand" evidence="4">
    <location>
        <begin position="109"/>
        <end position="117"/>
    </location>
</feature>
<feature type="helix" evidence="4">
    <location>
        <begin position="120"/>
        <end position="122"/>
    </location>
</feature>
<feature type="strand" evidence="4">
    <location>
        <begin position="126"/>
        <end position="133"/>
    </location>
</feature>
<feature type="turn" evidence="4">
    <location>
        <begin position="135"/>
        <end position="137"/>
    </location>
</feature>
<feature type="helix" evidence="4">
    <location>
        <begin position="148"/>
        <end position="169"/>
    </location>
</feature>
<feature type="helix" evidence="4">
    <location>
        <begin position="174"/>
        <end position="176"/>
    </location>
</feature>
<feature type="strand" evidence="4">
    <location>
        <begin position="177"/>
        <end position="179"/>
    </location>
</feature>
<comment type="function">
    <text>Probable ligand-binding protein.</text>
</comment>
<comment type="subcellular location">
    <subcellularLocation>
        <location evidence="3">Secreted</location>
    </subcellularLocation>
</comment>
<comment type="allergen">
    <text evidence="2">Causes an allergic reaction in human.</text>
</comment>
<comment type="similarity">
    <text evidence="3">Belongs to the calycin superfamily. Triabin family.</text>
</comment>
<name>BLG4_BLAGE</name>
<reference key="1">
    <citation type="journal article" date="1995" name="J. Biol. Chem.">
        <title>Cloning of cockroach allergen, Bla g 4, identifies ligand binding proteins (or calycins) as a cause of IgE antibody responses.</title>
        <authorList>
            <person name="Arruda L.K."/>
            <person name="Vailes L.D."/>
            <person name="Hayden M.L."/>
            <person name="Benjamin D.C."/>
            <person name="Chapman M.D."/>
        </authorList>
    </citation>
    <scope>NUCLEOTIDE SEQUENCE [MRNA]</scope>
    <scope>ALLERGEN</scope>
</reference>
<keyword id="KW-0002">3D-structure</keyword>
<keyword id="KW-0020">Allergen</keyword>
<keyword id="KW-0325">Glycoprotein</keyword>
<keyword id="KW-0964">Secreted</keyword>
<keyword id="KW-0732">Signal</keyword>
<proteinExistence type="evidence at protein level"/>
<sequence length="182" mass="20927">AVLALCATDTLANEDCFRHESLVPNLDYERFRGSWIIAAGTSEALTQYKCWIDRFSYDDALVSKYTDSQGKNRTTIRGRTKFEGNKFTIDYNDKGKAFSAPYSVLATDYENYAIVEGCPAAANGHVIYVQIRFSVRRFHPKLGDKEMIQHYTLDQVNQHKKAIEEDLKHFNLKYEDLHSTCH</sequence>
<protein>
    <recommendedName>
        <fullName>Allergen Bla g 4</fullName>
    </recommendedName>
    <alternativeName>
        <fullName>Allergen Bla g IV</fullName>
    </alternativeName>
    <allergenName>Bla g 4</allergenName>
</protein>